<name>KCNE1_HUMAN</name>
<comment type="function">
    <text evidence="12 14 21 28">Ancillary protein that functions as a regulatory subunit of the voltage-gated potassium (Kv) channel complex composed of pore-forming and potassium-conducting alpha subunits and of regulatory beta subunits. KCNE1 beta subunit modulates the gating kinetics and enhances stability of the channel complex (PubMed:19219384, PubMed:20533308, PubMed:9230439). Alters the gating of the delayed rectifier Kv channel containing KCNB1 alpha subunit (PubMed:19219384). Associates with KCNQ1/KVLQT1 alpha subunit to form the slowly activating delayed rectifier cardiac potassium (IKs) channel responsible for ventricular muscle action potential repolarization (PubMed:20533308). The outward current reaches its steady state only after 50 seconds (Probable). Assembly with KCNH2/HERG alpha subunit Kv channel may regulate the rapidly activating component of the delayed rectifying potassium current (IKr) in heart (PubMed:9230439).</text>
</comment>
<comment type="subunit">
    <text evidence="2 14 21">Interacts with KCNB1. Interacts with KCNC2 (By similarity). Associates with KCNH2/HERG (PubMed:9230439). Interacts with KNCQ1; targets the complex KNCQ1-KCNE1 to the membrane raft (PubMed:20533308). The complex KNCQ1-KNCE1 interacts with the scolopendra toxin SSD609 (PubMed:26307551).</text>
</comment>
<comment type="interaction">
    <interactant intactId="EBI-7043557">
        <id>P15382</id>
    </interactant>
    <interactant intactId="EBI-359667">
        <id>P51787</id>
        <label>KCNQ1</label>
    </interactant>
    <organismsDiffer>false</organismsDiffer>
    <experiments>4</experiments>
</comment>
<comment type="interaction">
    <interactant intactId="EBI-7043557">
        <id>P15382</id>
    </interactant>
    <interactant intactId="EBI-8784724">
        <id>A6HIS0</id>
        <label>Tcap</label>
    </interactant>
    <organismsDiffer>true</organismsDiffer>
    <experiments>3</experiments>
</comment>
<comment type="subcellular location">
    <subcellularLocation>
        <location evidence="12">Cell membrane</location>
        <topology evidence="28">Single-pass type I membrane protein</topology>
    </subcellularLocation>
    <subcellularLocation>
        <location evidence="2">Apical cell membrane</location>
    </subcellularLocation>
    <subcellularLocation>
        <location evidence="14">Membrane raft</location>
    </subcellularLocation>
    <text evidence="2 14">Colocalizes with KCNB1 at the plasma membrane (By similarity). Targets to the membrane raft when associated with KCNQ1 (PubMed:20533308).</text>
</comment>
<comment type="tissue specificity">
    <text evidence="12 22">Expressed in lung, kidney, testis, ovaries, small intestine, peripheral blood leukocytes. Expressed in the heart (PubMed:19219384). Not detected in pancreas, spleen, prostate and colon. Restrictively localized in the apical membrane portion of epithelial cells.</text>
</comment>
<comment type="PTM">
    <text evidence="1">Phosphorylation inhibits the potassium current.</text>
</comment>
<comment type="PTM">
    <text evidence="15 16">N-glycosylation at Asn-26 occurs post-translationally, and requires prior cotranslational glycosylation at Asn-5.</text>
</comment>
<comment type="disease" evidence="4 16 23 24">
    <disease id="DI-00605">
        <name>Jervell and Lange-Nielsen syndrome 2</name>
        <acronym>JLNS2</acronym>
        <description>An autosomal recessive disorder characterized by congenital deafness, prolongation of the QT interval, syncopal attacks due to ventricular arrhythmias, and a high risk of sudden death.</description>
        <dbReference type="MIM" id="612347"/>
    </disease>
    <text>The disease is caused by variants affecting the gene represented in this entry.</text>
</comment>
<comment type="disease" evidence="4 5 6 10 13 17 25 26">
    <disease id="DI-00683">
        <name>Long QT syndrome 5</name>
        <acronym>LQT5</acronym>
        <description>A heart disorder characterized by a prolonged QT interval on the ECG and polymorphic ventricular arrhythmias. They cause syncope and sudden death in response to exercise or emotional stress, and can present with a sentinel event of sudden cardiac death in infancy.</description>
        <dbReference type="MIM" id="613695"/>
    </disease>
    <text>The disease is caused by variants affecting the gene represented in this entry.</text>
</comment>
<comment type="similarity">
    <text evidence="28">Belongs to the potassium channel KCNE family.</text>
</comment>
<comment type="sequence caution" evidence="28">
    <conflict type="erroneous termination">
        <sequence resource="EMBL-CDS" id="AAH36452"/>
    </conflict>
    <text>Truncated C-terminus.</text>
</comment>
<reference key="1">
    <citation type="journal article" date="1989" name="Biochem. Biophys. Res. Commun.">
        <title>Molecular cloning and sequence analysis of human genomic DNA encoding a novel membrane protein which exhibits a slowly activating potassium channel activity.</title>
        <authorList>
            <person name="Murai T."/>
            <person name="Kakizuka A."/>
            <person name="Takumi T."/>
            <person name="Ohkubo H."/>
            <person name="Nakanishi S."/>
        </authorList>
    </citation>
    <scope>NUCLEOTIDE SEQUENCE [GENOMIC DNA]</scope>
</reference>
<reference key="2">
    <citation type="journal article" date="1994" name="Gene">
        <title>Polymorphism of the gene encoding a human minimal potassium ion channel (minK).</title>
        <authorList>
            <person name="Lai L.P."/>
            <person name="Deng C.L."/>
            <person name="Moss A.J."/>
            <person name="Kass R.S."/>
            <person name="Liang C.S."/>
        </authorList>
    </citation>
    <scope>NUCLEOTIDE SEQUENCE [GENOMIC DNA]</scope>
    <scope>VARIANT GLY-38</scope>
    <source>
        <tissue>Leukocyte</tissue>
    </source>
</reference>
<reference key="3">
    <citation type="submission" date="1999-03" db="EMBL/GenBank/DDBJ databases">
        <title>Delayed rectifier potassium channel subunit from human cornea epithelium.</title>
        <authorList>
            <person name="Rae J.L."/>
        </authorList>
    </citation>
    <scope>NUCLEOTIDE SEQUENCE [MRNA]</scope>
    <source>
        <tissue>Cornea</tissue>
    </source>
</reference>
<reference key="4">
    <citation type="submission" date="2006-06" db="EMBL/GenBank/DDBJ databases">
        <authorList>
            <consortium name="NHLBI resequencing and genotyping service (RS&amp;G)"/>
        </authorList>
    </citation>
    <scope>NUCLEOTIDE SEQUENCE [GENOMIC DNA]</scope>
</reference>
<reference key="5">
    <citation type="journal article" date="2004" name="Genome Res.">
        <title>The status, quality, and expansion of the NIH full-length cDNA project: the Mammalian Gene Collection (MGC).</title>
        <authorList>
            <consortium name="The MGC Project Team"/>
        </authorList>
    </citation>
    <scope>NUCLEOTIDE SEQUENCE [LARGE SCALE MRNA]</scope>
    <scope>VARIANTS HIS-32 AND GLY-38</scope>
    <source>
        <tissue>Testis</tissue>
    </source>
</reference>
<reference key="6">
    <citation type="journal article" date="1997" name="EMBO J.">
        <title>Properties of KvLQT1 K+ channel mutations in Romano-Ward and Jervell and Lange-Nielsen inherited cardiac arrhythmias.</title>
        <authorList>
            <person name="Chouabe C."/>
            <person name="Neyroud N."/>
            <person name="Guicheney P."/>
            <person name="Lazdunski M."/>
            <person name="Romey G."/>
            <person name="Barhanin J."/>
        </authorList>
    </citation>
    <scope>TISSUE SPECIFICITY</scope>
</reference>
<reference key="7">
    <citation type="journal article" date="1997" name="Nature">
        <title>A minK-HERG complex regulates the cardiac potassium current I(Kr).</title>
        <authorList>
            <person name="McDonald T.V."/>
            <person name="Yu Z."/>
            <person name="Ming Z."/>
            <person name="Palma E."/>
            <person name="Meyers M.B."/>
            <person name="Wang K.-W."/>
            <person name="Goldstein S.A.N."/>
            <person name="Fishman G.I."/>
        </authorList>
    </citation>
    <scope>FUNCTION</scope>
    <scope>INTERACTION WITH KCNH2</scope>
</reference>
<reference key="8">
    <citation type="journal article" date="2002" name="FASEB J.">
        <title>Disease-associated mutations in KCNE potassium channel subunits (MiRPs) reveal promiscuous disruption of multiple currents and conservation of mechanism.</title>
        <authorList>
            <person name="Abbott G.W."/>
            <person name="Goldstein S.A.N."/>
        </authorList>
    </citation>
    <scope>MUTAGENESIS OF LYS-69</scope>
</reference>
<reference key="9">
    <citation type="journal article" date="2009" name="J. Membr. Biol.">
        <title>Regulation of the Kv2.1 potassium channel by MinK and MiRP1.</title>
        <authorList>
            <person name="McCrossan Z.A."/>
            <person name="Roepke T.K."/>
            <person name="Lewis A."/>
            <person name="Panaghie G."/>
            <person name="Abbott G.W."/>
        </authorList>
    </citation>
    <scope>FUNCTION</scope>
    <scope>SUBCELLULAR LOCATION</scope>
    <scope>TISSUE SPECIFICITY</scope>
</reference>
<reference key="10">
    <citation type="journal article" date="2010" name="J. Cell. Physiol.">
        <title>Impact of KCNE subunits on KCNQ1 (Kv7.1) channel membrane surface targeting.</title>
        <authorList>
            <person name="Roura-Ferrer M."/>
            <person name="Sole L."/>
            <person name="Oliveras A."/>
            <person name="Dahan R."/>
            <person name="Bielanska J."/>
            <person name="Villarroel A."/>
            <person name="Comes N."/>
            <person name="Felipe A."/>
        </authorList>
    </citation>
    <scope>FUNCTION</scope>
    <scope>INTERACTION WITH KCNQ1</scope>
    <scope>SUBCELLULAR LOCATION</scope>
</reference>
<reference key="11">
    <citation type="journal article" date="2011" name="J. Biol. Chem.">
        <title>Post-translational N-glycosylation of type I transmembrane KCNE1 peptides: implications for membrane protein biogenesis and disease.</title>
        <authorList>
            <person name="Bas T."/>
            <person name="Gao G.Y."/>
            <person name="Lvov A."/>
            <person name="Chandrasekhar K.D."/>
            <person name="Gilmore R."/>
            <person name="Kobertz W.R."/>
        </authorList>
    </citation>
    <scope>GLYCOSYLATION AT ASN-5 AND ASN-26</scope>
    <scope>CHARACTERIZATION OF VARIANT JLNS2 ILE-7</scope>
</reference>
<reference key="12">
    <citation type="journal article" date="2011" name="J. Physiol. (Lond.)">
        <title>O-glycosylation of the cardiac I(Ks) complex.</title>
        <authorList>
            <person name="Chandrasekhar K.D."/>
            <person name="Lvov A."/>
            <person name="Terrenoire C."/>
            <person name="Gao G.Y."/>
            <person name="Kass R.S."/>
            <person name="Kobertz W.R."/>
        </authorList>
    </citation>
    <scope>GLYCOSYLATION AT ASN-5 AND THR-7</scope>
    <scope>MUTAGENESIS OF ASN-5; THR-6; THR-7 AND SER-28</scope>
</reference>
<reference key="13">
    <citation type="journal article" date="2015" name="Sci. Rep.">
        <title>A distinct three-helix centipede toxin SSD609 inhibits I(ks) channels by interacting with the KCNE1 auxiliary subunit.</title>
        <authorList>
            <person name="Sun P."/>
            <person name="Wu F."/>
            <person name="Wen M."/>
            <person name="Yang X."/>
            <person name="Wang C."/>
            <person name="Li Y."/>
            <person name="He S."/>
            <person name="Zhang L."/>
            <person name="Zhang Y."/>
            <person name="Tian C."/>
        </authorList>
    </citation>
    <scope>MUTAGENESIS OF LYS-15; GLU-19 AND ARG-32</scope>
    <scope>SITE GLU-19</scope>
</reference>
<reference key="14">
    <citation type="journal article" date="2008" name="Biochemistry">
        <title>Structure of KCNE1 and implications for how it modulates the KCNQ1 potassium channel.</title>
        <authorList>
            <person name="Kang C."/>
            <person name="Tian C."/>
            <person name="Soennichsen F.D."/>
            <person name="Smith J.A."/>
            <person name="Meiler J."/>
            <person name="George A.L. Jr."/>
            <person name="Vanoye C.G."/>
            <person name="Kim H.J."/>
            <person name="Sanders C.R."/>
        </authorList>
    </citation>
    <scope>STRUCTURE BY NMR</scope>
</reference>
<reference key="15">
    <citation type="journal article" date="1996" name="J. Mol. Cell. Cardiol.">
        <title>Exclusion of KCNE1 (IsK) as a candidate gene for Jervell and Lange-Nielsen syndrome.</title>
        <authorList>
            <person name="Tesson F."/>
            <person name="Donger C."/>
            <person name="Denjoy I."/>
            <person name="Berthet M."/>
            <person name="Bennaceur M."/>
            <person name="Petit C."/>
            <person name="Coumel P."/>
            <person name="Schwartz K."/>
            <person name="Guicheney P."/>
        </authorList>
    </citation>
    <scope>VARIANT ASN-85</scope>
</reference>
<reference key="16">
    <citation type="journal article" date="1997" name="Hum. Mol. Genet.">
        <title>IsK and KvLQT1: mutation in either of the two subunits of the slow component of the delayed rectifier potassium channel can cause Jervell and Lange-Nielsen syndrome.</title>
        <authorList>
            <person name="Tyson J."/>
            <person name="Tranebjaerg L."/>
            <person name="Bellman S."/>
            <person name="Wren C."/>
            <person name="Taylor J.F.N."/>
            <person name="Bathen J."/>
            <person name="Aslaksen B."/>
            <person name="Soerland S.J."/>
            <person name="Lund O."/>
            <person name="Malcolm S."/>
            <person name="Pembrey M."/>
            <person name="Bhattacharya S."/>
            <person name="Bitner-Glindzicz M."/>
        </authorList>
    </citation>
    <scope>VARIANT JLNS2 58-THR-LEU-59 DELINS PRO-PRO</scope>
</reference>
<reference key="17">
    <citation type="journal article" date="1997" name="Nat. Genet.">
        <title>KCNE1 mutations cause Jervell and Lange-Nielsen syndrome.</title>
        <authorList>
            <person name="Schulze-Bahr E."/>
            <person name="Wang Q."/>
            <person name="Wedekind H."/>
            <person name="Haverkamp W."/>
            <person name="Chen Q."/>
            <person name="Sun Y."/>
            <person name="Rubie C."/>
            <person name="Hordt M."/>
            <person name="Towbin J.A."/>
            <person name="Borggrefe M."/>
            <person name="Assmann G."/>
            <person name="Qu X."/>
            <person name="Somberg J.C."/>
            <person name="Breithardt G."/>
            <person name="Oberti C."/>
            <person name="Funke H."/>
        </authorList>
    </citation>
    <scope>VARIANTS JLNS2 ILE-7 AND ASN-76</scope>
</reference>
<reference key="18">
    <citation type="journal article" date="1997" name="Nat. Genet.">
        <title>Mutations in the hminK gene cause long QT syndrome and suppress IKs function.</title>
        <authorList>
            <person name="Splawski I."/>
            <person name="Tristani-Firouzi M."/>
            <person name="Lehmann M.H."/>
            <person name="Sanguinetti M.C."/>
            <person name="Keating M.T."/>
        </authorList>
    </citation>
    <scope>VARIANTS LQT5 LEU-74 AND ASN-76</scope>
</reference>
<reference key="19">
    <citation type="journal article" date="1998" name="Circulation">
        <title>Mutation of the gene for IsK associated with both Jervell and Lange-Nielsen and Romano-Ward forms of Long-QT syndrome.</title>
        <authorList>
            <person name="Duggal P."/>
            <person name="Vesely M.R."/>
            <person name="Wattanasirichaigoon D."/>
            <person name="Villafane J."/>
            <person name="Kaushik V."/>
            <person name="Beggs A.H."/>
        </authorList>
    </citation>
    <scope>VARIANT LQT5 ASN-76</scope>
</reference>
<reference key="20">
    <citation type="journal article" date="1999" name="Hum. Mol. Genet.">
        <title>Cellular dysfunction of LQT5-minK mutants: abnormalities of IKs, IKr and trafficking in long QT syndrome.</title>
        <authorList>
            <person name="Bianchi L."/>
            <person name="Shen Z."/>
            <person name="Dennis A.T."/>
            <person name="Priori S.G."/>
            <person name="Napolitano C."/>
            <person name="Ronchetti E."/>
            <person name="Bryskin R."/>
            <person name="Schwartz P.J."/>
            <person name="Brown A.M."/>
        </authorList>
    </citation>
    <scope>VARIANTS JLNS2 PHE-47; HIS-51 AND ASN-76</scope>
    <scope>VARIANT LQT5 ARG-87</scope>
</reference>
<reference key="21">
    <citation type="journal article" date="2000" name="Circulation">
        <title>Spectrum of mutations in long-QT syndrome genes. KVLQT1, HERG, SCN5A, KCNE1, and KCNE2.</title>
        <authorList>
            <person name="Splawski I."/>
            <person name="Shen J."/>
            <person name="Timothy K.W."/>
            <person name="Lehmann M.H."/>
            <person name="Priori S.G."/>
            <person name="Robinson J.L."/>
            <person name="Moss A.J."/>
            <person name="Schwartz P.J."/>
            <person name="Towbin J.A."/>
            <person name="Vincent G.M."/>
            <person name="Keating M.T."/>
        </authorList>
    </citation>
    <scope>VARIANTS LQT5 HIS-32; TRP-98 AND THR-127</scope>
</reference>
<reference key="22">
    <citation type="journal article" date="2001" name="J. Mol. Med.">
        <title>A novel long-QT 5 gene mutation in the C-terminus (V109I) is associated with a mild phenotype.</title>
        <authorList>
            <person name="Schulze-Bahr E."/>
            <person name="Schwarz M."/>
            <person name="Hauenschild S."/>
            <person name="Wedekind H."/>
            <person name="Funke H."/>
            <person name="Haverkamp W."/>
            <person name="Breithardt W."/>
            <person name="Pongs O."/>
            <person name="Isbrandt D."/>
            <person name="Breithardt G."/>
        </authorList>
    </citation>
    <scope>VARIANT LQT5 ILE-109</scope>
</reference>
<reference key="23">
    <citation type="journal article" date="2004" name="Circulation">
        <title>Compound mutations: a common cause of severe long-QT syndrome.</title>
        <authorList>
            <person name="Westenskow P."/>
            <person name="Splawski I."/>
            <person name="Timothy K.W."/>
            <person name="Keating M.T."/>
            <person name="Sanguinetti M.C."/>
        </authorList>
    </citation>
    <scope>VARIANT ASN-85</scope>
</reference>
<reference key="24">
    <citation type="journal article" date="2005" name="JAMA">
        <title>Genetic testing in the long QT syndrome: development and validation of an efficient approach to genotyping in clinical practice.</title>
        <authorList>
            <person name="Napolitano C."/>
            <person name="Priori S.G."/>
            <person name="Schwartz P.J."/>
            <person name="Bloise R."/>
            <person name="Ronchetti E."/>
            <person name="Nastoli J."/>
            <person name="Bottelli G."/>
            <person name="Cerrone M."/>
            <person name="Leonardi S."/>
        </authorList>
    </citation>
    <scope>VARIANTS LQT5 HIS-36 AND SER-53</scope>
</reference>
<reference key="25">
    <citation type="journal article" date="2006" name="Hum. Mutat.">
        <title>The contribution of genes involved in potassium-recycling in the inner ear to noise-induced hearing loss.</title>
        <authorList>
            <person name="Van Laer L."/>
            <person name="Carlsson P.-I."/>
            <person name="Ottschytsch N."/>
            <person name="Bondeson M.-L."/>
            <person name="Konings A."/>
            <person name="Vandevelde A."/>
            <person name="Dieltjens N."/>
            <person name="Fransen E."/>
            <person name="Snyders D."/>
            <person name="Borg E."/>
            <person name="Raes A."/>
            <person name="Van Camp G."/>
        </authorList>
    </citation>
    <scope>VARIANTS GLY-38 AND ASN-85</scope>
    <scope>CHARACTERIZATION OF VARIANT ASN-85</scope>
</reference>
<reference key="26">
    <citation type="journal article" date="2009" name="Heart Rhythm">
        <title>Spectrum and prevalence of mutations from the first 2,500 consecutive unrelated patients referred for the FAMILION long QT syndrome genetic test.</title>
        <authorList>
            <person name="Kapplinger J.D."/>
            <person name="Tester D.J."/>
            <person name="Salisbury B.A."/>
            <person name="Carr J.L."/>
            <person name="Harris-Kerr C."/>
            <person name="Pollevick G.D."/>
            <person name="Wilde A.A."/>
            <person name="Ackerman M.J."/>
        </authorList>
    </citation>
    <scope>VARIANTS LQT5 VAL-8; MET-10; LEU-28; HIS-32; SER-55; PRO-58; PRO-59; CYS-67; HIS-67; MET-70; ASN-76; LYS-83 AND MET-125</scope>
</reference>
<reference key="27">
    <citation type="journal article" date="2014" name="J. Cell Sci.">
        <title>Long QT mutations at the interface between KCNQ1 helix C and KCNE1 disrupt I(KS) regulation by PKA and PIP(2).</title>
        <authorList>
            <person name="Dvir M."/>
            <person name="Strulovich R."/>
            <person name="Sachyani D."/>
            <person name="Ben-Tal Cohen I."/>
            <person name="Haitin Y."/>
            <person name="Dessauer C."/>
            <person name="Pongs O."/>
            <person name="Kass R."/>
            <person name="Hirsch J.A."/>
            <person name="Attali B."/>
        </authorList>
    </citation>
    <scope>CHARACTERIZATION OF VARIANTS LQT5 ILE-109 AND THR-127</scope>
    <scope>MUTAGENESIS OF 109-VAL--PRO-129</scope>
</reference>
<proteinExistence type="evidence at protein level"/>
<accession>P15382</accession>
<accession>A5H1P2</accession>
<accession>Q8N709</accession>
<accession>Q91Z94</accession>
<keyword id="KW-0002">3D-structure</keyword>
<keyword id="KW-1003">Cell membrane</keyword>
<keyword id="KW-0209">Deafness</keyword>
<keyword id="KW-0225">Disease variant</keyword>
<keyword id="KW-0325">Glycoprotein</keyword>
<keyword id="KW-0407">Ion channel</keyword>
<keyword id="KW-0406">Ion transport</keyword>
<keyword id="KW-0454">Long QT syndrome</keyword>
<keyword id="KW-0472">Membrane</keyword>
<keyword id="KW-0597">Phosphoprotein</keyword>
<keyword id="KW-0630">Potassium</keyword>
<keyword id="KW-0631">Potassium channel</keyword>
<keyword id="KW-0633">Potassium transport</keyword>
<keyword id="KW-1185">Reference proteome</keyword>
<keyword id="KW-0812">Transmembrane</keyword>
<keyword id="KW-1133">Transmembrane helix</keyword>
<keyword id="KW-0813">Transport</keyword>
<keyword id="KW-0851">Voltage-gated channel</keyword>
<organism>
    <name type="scientific">Homo sapiens</name>
    <name type="common">Human</name>
    <dbReference type="NCBI Taxonomy" id="9606"/>
    <lineage>
        <taxon>Eukaryota</taxon>
        <taxon>Metazoa</taxon>
        <taxon>Chordata</taxon>
        <taxon>Craniata</taxon>
        <taxon>Vertebrata</taxon>
        <taxon>Euteleostomi</taxon>
        <taxon>Mammalia</taxon>
        <taxon>Eutheria</taxon>
        <taxon>Euarchontoglires</taxon>
        <taxon>Primates</taxon>
        <taxon>Haplorrhini</taxon>
        <taxon>Catarrhini</taxon>
        <taxon>Hominidae</taxon>
        <taxon>Homo</taxon>
    </lineage>
</organism>
<protein>
    <recommendedName>
        <fullName>Potassium voltage-gated channel subfamily E member 1</fullName>
    </recommendedName>
    <alternativeName>
        <fullName>Delayed rectifier potassium channel subunit IsK</fullName>
    </alternativeName>
    <alternativeName>
        <fullName>IKs producing slow voltage-gated potassium channel subunit beta Mink</fullName>
    </alternativeName>
    <alternativeName>
        <fullName evidence="27">Minimal potassium channel</fullName>
        <shortName evidence="27">MinK</shortName>
    </alternativeName>
</protein>
<sequence>MILSNTTAVTPFLTKLWQETVQQGGNMSGLARRSPRSSDGKLEALYVLMVLGFFGFFTLGIMLSYIRSKKLEHSNDPFNVYIESDAWQEKDKAYVQARVLESYRSCYVVENHLAIEQPNTHLPETKPSP</sequence>
<evidence type="ECO:0000250" key="1"/>
<evidence type="ECO:0000250" key="2">
    <source>
        <dbReference type="UniProtKB" id="P15383"/>
    </source>
</evidence>
<evidence type="ECO:0000255" key="3"/>
<evidence type="ECO:0000269" key="4">
    <source>
    </source>
</evidence>
<evidence type="ECO:0000269" key="5">
    <source>
    </source>
</evidence>
<evidence type="ECO:0000269" key="6">
    <source>
    </source>
</evidence>
<evidence type="ECO:0000269" key="7">
    <source>
    </source>
</evidence>
<evidence type="ECO:0000269" key="8">
    <source>
    </source>
</evidence>
<evidence type="ECO:0000269" key="9">
    <source>
    </source>
</evidence>
<evidence type="ECO:0000269" key="10">
    <source>
    </source>
</evidence>
<evidence type="ECO:0000269" key="11">
    <source>
    </source>
</evidence>
<evidence type="ECO:0000269" key="12">
    <source>
    </source>
</evidence>
<evidence type="ECO:0000269" key="13">
    <source>
    </source>
</evidence>
<evidence type="ECO:0000269" key="14">
    <source>
    </source>
</evidence>
<evidence type="ECO:0000269" key="15">
    <source>
    </source>
</evidence>
<evidence type="ECO:0000269" key="16">
    <source>
    </source>
</evidence>
<evidence type="ECO:0000269" key="17">
    <source>
    </source>
</evidence>
<evidence type="ECO:0000269" key="18">
    <source>
    </source>
</evidence>
<evidence type="ECO:0000269" key="19">
    <source>
    </source>
</evidence>
<evidence type="ECO:0000269" key="20">
    <source>
    </source>
</evidence>
<evidence type="ECO:0000269" key="21">
    <source>
    </source>
</evidence>
<evidence type="ECO:0000269" key="22">
    <source>
    </source>
</evidence>
<evidence type="ECO:0000269" key="23">
    <source>
    </source>
</evidence>
<evidence type="ECO:0000269" key="24">
    <source>
    </source>
</evidence>
<evidence type="ECO:0000269" key="25">
    <source>
    </source>
</evidence>
<evidence type="ECO:0000269" key="26">
    <source>
    </source>
</evidence>
<evidence type="ECO:0000303" key="27">
    <source>
    </source>
</evidence>
<evidence type="ECO:0000305" key="28"/>
<evidence type="ECO:0000312" key="29">
    <source>
        <dbReference type="HGNC" id="HGNC:6240"/>
    </source>
</evidence>
<evidence type="ECO:0007829" key="30">
    <source>
        <dbReference type="PDB" id="2K21"/>
    </source>
</evidence>
<dbReference type="EMBL" id="M26685">
    <property type="protein sequence ID" value="AAA36129.1"/>
    <property type="molecule type" value="Genomic_DNA"/>
</dbReference>
<dbReference type="EMBL" id="L33815">
    <property type="protein sequence ID" value="AAA63905.1"/>
    <property type="molecule type" value="Genomic_DNA"/>
</dbReference>
<dbReference type="EMBL" id="L28168">
    <property type="protein sequence ID" value="AAA58418.1"/>
    <property type="molecule type" value="mRNA"/>
</dbReference>
<dbReference type="EMBL" id="AF135188">
    <property type="protein sequence ID" value="AAD25096.1"/>
    <property type="molecule type" value="mRNA"/>
</dbReference>
<dbReference type="EMBL" id="DQ784803">
    <property type="protein sequence ID" value="ABQ01238.1"/>
    <property type="molecule type" value="Genomic_DNA"/>
</dbReference>
<dbReference type="EMBL" id="BC036452">
    <property type="protein sequence ID" value="AAH36452.1"/>
    <property type="status" value="ALT_SEQ"/>
    <property type="molecule type" value="mRNA"/>
</dbReference>
<dbReference type="CCDS" id="CCDS13636.1"/>
<dbReference type="PIR" id="A32447">
    <property type="entry name" value="A32447"/>
</dbReference>
<dbReference type="RefSeq" id="NP_000210.2">
    <property type="nucleotide sequence ID" value="NM_000219.6"/>
</dbReference>
<dbReference type="RefSeq" id="NP_001121140.1">
    <property type="nucleotide sequence ID" value="NM_001127668.4"/>
</dbReference>
<dbReference type="RefSeq" id="NP_001121141.1">
    <property type="nucleotide sequence ID" value="NM_001127669.4"/>
</dbReference>
<dbReference type="RefSeq" id="NP_001121142.1">
    <property type="nucleotide sequence ID" value="NM_001127670.4"/>
</dbReference>
<dbReference type="RefSeq" id="NP_001257331.1">
    <property type="nucleotide sequence ID" value="NM_001270402.3"/>
</dbReference>
<dbReference type="RefSeq" id="NP_001257332.1">
    <property type="nucleotide sequence ID" value="NM_001270403.2"/>
</dbReference>
<dbReference type="RefSeq" id="NP_001257333.1">
    <property type="nucleotide sequence ID" value="NM_001270404.3"/>
</dbReference>
<dbReference type="RefSeq" id="NP_001257334.1">
    <property type="nucleotide sequence ID" value="NM_001270405.3"/>
</dbReference>
<dbReference type="PDB" id="2K21">
    <property type="method" value="NMR"/>
    <property type="chains" value="A=1-129"/>
</dbReference>
<dbReference type="PDBsum" id="2K21"/>
<dbReference type="BMRB" id="P15382"/>
<dbReference type="SMR" id="P15382"/>
<dbReference type="BioGRID" id="109955">
    <property type="interactions" value="21"/>
</dbReference>
<dbReference type="ComplexPortal" id="CPX-3072">
    <property type="entry name" value="Voltage-gated potassium channel complex variant 1"/>
</dbReference>
<dbReference type="ComplexPortal" id="CPX-3271">
    <property type="entry name" value="KCNQ1-KCNE1 I(Ks) channel complex"/>
</dbReference>
<dbReference type="CORUM" id="P15382"/>
<dbReference type="FunCoup" id="P15382">
    <property type="interactions" value="157"/>
</dbReference>
<dbReference type="IntAct" id="P15382">
    <property type="interactions" value="19"/>
</dbReference>
<dbReference type="MINT" id="P15382"/>
<dbReference type="STRING" id="9606.ENSP00000382226"/>
<dbReference type="BindingDB" id="P15382"/>
<dbReference type="ChEMBL" id="CHEMBL4872"/>
<dbReference type="DrugBank" id="DB04957">
    <property type="generic name" value="Azimilide"/>
</dbReference>
<dbReference type="DrugBank" id="DB00228">
    <property type="generic name" value="Enflurane"/>
</dbReference>
<dbReference type="DrugBank" id="DB01110">
    <property type="generic name" value="Miconazole"/>
</dbReference>
<dbReference type="DrugBank" id="DB01069">
    <property type="generic name" value="Promethazine"/>
</dbReference>
<dbReference type="GlyCosmos" id="P15382">
    <property type="glycosylation" value="3 sites, No reported glycans"/>
</dbReference>
<dbReference type="GlyGen" id="P15382">
    <property type="glycosylation" value="3 sites"/>
</dbReference>
<dbReference type="iPTMnet" id="P15382"/>
<dbReference type="PhosphoSitePlus" id="P15382"/>
<dbReference type="BioMuta" id="KCNE1"/>
<dbReference type="DMDM" id="116416"/>
<dbReference type="PaxDb" id="9606-ENSP00000337255"/>
<dbReference type="Antibodypedia" id="22953">
    <property type="antibodies" value="265 antibodies from 29 providers"/>
</dbReference>
<dbReference type="DNASU" id="3753"/>
<dbReference type="Ensembl" id="ENST00000337385.7">
    <property type="protein sequence ID" value="ENSP00000337255.3"/>
    <property type="gene ID" value="ENSG00000180509.13"/>
</dbReference>
<dbReference type="Ensembl" id="ENST00000399284.1">
    <property type="protein sequence ID" value="ENSP00000382225.1"/>
    <property type="gene ID" value="ENSG00000180509.13"/>
</dbReference>
<dbReference type="Ensembl" id="ENST00000399286.3">
    <property type="protein sequence ID" value="ENSP00000382226.2"/>
    <property type="gene ID" value="ENSG00000180509.13"/>
</dbReference>
<dbReference type="Ensembl" id="ENST00000399289.7">
    <property type="protein sequence ID" value="ENSP00000382228.3"/>
    <property type="gene ID" value="ENSG00000180509.13"/>
</dbReference>
<dbReference type="Ensembl" id="ENST00000416357.6">
    <property type="protein sequence ID" value="ENSP00000416258.2"/>
    <property type="gene ID" value="ENSG00000180509.13"/>
</dbReference>
<dbReference type="Ensembl" id="ENST00000432085.5">
    <property type="protein sequence ID" value="ENSP00000412498.1"/>
    <property type="gene ID" value="ENSG00000180509.13"/>
</dbReference>
<dbReference type="Ensembl" id="ENST00000611936.1">
    <property type="protein sequence ID" value="ENSP00000478215.1"/>
    <property type="gene ID" value="ENSG00000180509.13"/>
</dbReference>
<dbReference type="Ensembl" id="ENST00000621601.4">
    <property type="protein sequence ID" value="ENSP00000483895.1"/>
    <property type="gene ID" value="ENSG00000180509.13"/>
</dbReference>
<dbReference type="GeneID" id="3753"/>
<dbReference type="KEGG" id="hsa:3753"/>
<dbReference type="MANE-Select" id="ENST00000399286.3">
    <property type="protein sequence ID" value="ENSP00000382226.2"/>
    <property type="RefSeq nucleotide sequence ID" value="NM_000219.6"/>
    <property type="RefSeq protein sequence ID" value="NP_000210.2"/>
</dbReference>
<dbReference type="UCSC" id="uc002ytz.5">
    <property type="organism name" value="human"/>
</dbReference>
<dbReference type="AGR" id="HGNC:6240"/>
<dbReference type="CTD" id="3753"/>
<dbReference type="DisGeNET" id="3753"/>
<dbReference type="GeneCards" id="KCNE1"/>
<dbReference type="GeneReviews" id="KCNE1"/>
<dbReference type="HGNC" id="HGNC:6240">
    <property type="gene designation" value="KCNE1"/>
</dbReference>
<dbReference type="HPA" id="ENSG00000180509">
    <property type="expression patterns" value="Group enriched (choroid plexus, fallopian tube, heart muscle, kidney)"/>
</dbReference>
<dbReference type="MalaCards" id="KCNE1"/>
<dbReference type="MIM" id="176261">
    <property type="type" value="gene"/>
</dbReference>
<dbReference type="MIM" id="612347">
    <property type="type" value="phenotype"/>
</dbReference>
<dbReference type="MIM" id="613695">
    <property type="type" value="phenotype"/>
</dbReference>
<dbReference type="neXtProt" id="NX_P15382"/>
<dbReference type="OpenTargets" id="ENSG00000180509"/>
<dbReference type="Orphanet" id="334">
    <property type="disease" value="Familial atrial fibrillation"/>
</dbReference>
<dbReference type="Orphanet" id="90647">
    <property type="disease" value="Jervell and Lange-Nielsen syndrome"/>
</dbReference>
<dbReference type="Orphanet" id="101016">
    <property type="disease" value="Romano-Ward syndrome"/>
</dbReference>
<dbReference type="PharmGKB" id="PA211"/>
<dbReference type="VEuPathDB" id="HostDB:ENSG00000180509"/>
<dbReference type="eggNOG" id="ENOG502SG7D">
    <property type="taxonomic scope" value="Eukaryota"/>
</dbReference>
<dbReference type="GeneTree" id="ENSGT00940000154497"/>
<dbReference type="HOGENOM" id="CLU_159026_0_0_1"/>
<dbReference type="InParanoid" id="P15382"/>
<dbReference type="OMA" id="ESCRACY"/>
<dbReference type="OrthoDB" id="8772344at2759"/>
<dbReference type="PAN-GO" id="P15382">
    <property type="GO annotations" value="10 GO annotations based on evolutionary models"/>
</dbReference>
<dbReference type="PhylomeDB" id="P15382"/>
<dbReference type="TreeFam" id="TF335976"/>
<dbReference type="PathwayCommons" id="P15382"/>
<dbReference type="Reactome" id="R-HSA-5576890">
    <property type="pathway name" value="Phase 3 - rapid repolarisation"/>
</dbReference>
<dbReference type="Reactome" id="R-HSA-5576893">
    <property type="pathway name" value="Phase 2 - plateau phase"/>
</dbReference>
<dbReference type="SignaLink" id="P15382"/>
<dbReference type="SIGNOR" id="P15382"/>
<dbReference type="BioGRID-ORCS" id="3753">
    <property type="hits" value="12 hits in 1153 CRISPR screens"/>
</dbReference>
<dbReference type="ChiTaRS" id="KCNE1">
    <property type="organism name" value="human"/>
</dbReference>
<dbReference type="EvolutionaryTrace" id="P15382"/>
<dbReference type="GeneWiki" id="KCNE1"/>
<dbReference type="GenomeRNAi" id="3753"/>
<dbReference type="Pharos" id="P15382">
    <property type="development level" value="Tchem"/>
</dbReference>
<dbReference type="PRO" id="PR:P15382"/>
<dbReference type="Proteomes" id="UP000005640">
    <property type="component" value="Chromosome 21"/>
</dbReference>
<dbReference type="RNAct" id="P15382">
    <property type="molecule type" value="protein"/>
</dbReference>
<dbReference type="Bgee" id="ENSG00000180509">
    <property type="expression patterns" value="Expressed in blood and 94 other cell types or tissues"/>
</dbReference>
<dbReference type="ExpressionAtlas" id="P15382">
    <property type="expression patterns" value="baseline and differential"/>
</dbReference>
<dbReference type="GO" id="GO:0016324">
    <property type="term" value="C:apical plasma membrane"/>
    <property type="evidence" value="ECO:0000250"/>
    <property type="project" value="BHF-UCL"/>
</dbReference>
<dbReference type="GO" id="GO:0009986">
    <property type="term" value="C:cell surface"/>
    <property type="evidence" value="ECO:0000314"/>
    <property type="project" value="BHF-UCL"/>
</dbReference>
<dbReference type="GO" id="GO:0005764">
    <property type="term" value="C:lysosome"/>
    <property type="evidence" value="ECO:0007005"/>
    <property type="project" value="UniProtKB"/>
</dbReference>
<dbReference type="GO" id="GO:0045121">
    <property type="term" value="C:membrane raft"/>
    <property type="evidence" value="ECO:0007669"/>
    <property type="project" value="UniProtKB-SubCell"/>
</dbReference>
<dbReference type="GO" id="GO:0005886">
    <property type="term" value="C:plasma membrane"/>
    <property type="evidence" value="ECO:0000314"/>
    <property type="project" value="UniProtKB"/>
</dbReference>
<dbReference type="GO" id="GO:0008076">
    <property type="term" value="C:voltage-gated potassium channel complex"/>
    <property type="evidence" value="ECO:0000314"/>
    <property type="project" value="BHF-UCL"/>
</dbReference>
<dbReference type="GO" id="GO:0030018">
    <property type="term" value="C:Z disc"/>
    <property type="evidence" value="ECO:0000250"/>
    <property type="project" value="BHF-UCL"/>
</dbReference>
<dbReference type="GO" id="GO:0005251">
    <property type="term" value="F:delayed rectifier potassium channel activity"/>
    <property type="evidence" value="ECO:0000314"/>
    <property type="project" value="UniProtKB"/>
</dbReference>
<dbReference type="GO" id="GO:0015459">
    <property type="term" value="F:potassium channel regulator activity"/>
    <property type="evidence" value="ECO:0000314"/>
    <property type="project" value="UniProtKB"/>
</dbReference>
<dbReference type="GO" id="GO:0031433">
    <property type="term" value="F:telethonin binding"/>
    <property type="evidence" value="ECO:0000353"/>
    <property type="project" value="BHF-UCL"/>
</dbReference>
<dbReference type="GO" id="GO:0044325">
    <property type="term" value="F:transmembrane transporter binding"/>
    <property type="evidence" value="ECO:0000318"/>
    <property type="project" value="GO_Central"/>
</dbReference>
<dbReference type="GO" id="GO:0086002">
    <property type="term" value="P:cardiac muscle cell action potential involved in contraction"/>
    <property type="evidence" value="ECO:0000315"/>
    <property type="project" value="BHF-UCL"/>
</dbReference>
<dbReference type="GO" id="GO:0086003">
    <property type="term" value="P:cardiac muscle cell contraction"/>
    <property type="evidence" value="ECO:0000303"/>
    <property type="project" value="ComplexPortal"/>
</dbReference>
<dbReference type="GO" id="GO:0071320">
    <property type="term" value="P:cellular response to cAMP"/>
    <property type="evidence" value="ECO:0000314"/>
    <property type="project" value="BHF-UCL"/>
</dbReference>
<dbReference type="GO" id="GO:0002070">
    <property type="term" value="P:epithelial cell maturation"/>
    <property type="evidence" value="ECO:0007669"/>
    <property type="project" value="Ensembl"/>
</dbReference>
<dbReference type="GO" id="GO:0086009">
    <property type="term" value="P:membrane repolarization"/>
    <property type="evidence" value="ECO:0000314"/>
    <property type="project" value="BHF-UCL"/>
</dbReference>
<dbReference type="GO" id="GO:0086011">
    <property type="term" value="P:membrane repolarization during action potential"/>
    <property type="evidence" value="ECO:0000314"/>
    <property type="project" value="BHF-UCL"/>
</dbReference>
<dbReference type="GO" id="GO:0086013">
    <property type="term" value="P:membrane repolarization during cardiac muscle cell action potential"/>
    <property type="evidence" value="ECO:0000314"/>
    <property type="project" value="BHF-UCL"/>
</dbReference>
<dbReference type="GO" id="GO:0098915">
    <property type="term" value="P:membrane repolarization during ventricular cardiac muscle cell action potential"/>
    <property type="evidence" value="ECO:0000315"/>
    <property type="project" value="BHF-UCL"/>
</dbReference>
<dbReference type="GO" id="GO:1902260">
    <property type="term" value="P:negative regulation of delayed rectifier potassium channel activity"/>
    <property type="evidence" value="ECO:0000314"/>
    <property type="project" value="UniProtKB"/>
</dbReference>
<dbReference type="GO" id="GO:0090315">
    <property type="term" value="P:negative regulation of protein targeting to membrane"/>
    <property type="evidence" value="ECO:0000250"/>
    <property type="project" value="BHF-UCL"/>
</dbReference>
<dbReference type="GO" id="GO:1901381">
    <property type="term" value="P:positive regulation of potassium ion transmembrane transport"/>
    <property type="evidence" value="ECO:0000314"/>
    <property type="project" value="BHF-UCL"/>
</dbReference>
<dbReference type="GO" id="GO:0097623">
    <property type="term" value="P:potassium ion export across plasma membrane"/>
    <property type="evidence" value="ECO:0000314"/>
    <property type="project" value="BHF-UCL"/>
</dbReference>
<dbReference type="GO" id="GO:0071805">
    <property type="term" value="P:potassium ion transmembrane transport"/>
    <property type="evidence" value="ECO:0000314"/>
    <property type="project" value="BHF-UCL"/>
</dbReference>
<dbReference type="GO" id="GO:0086091">
    <property type="term" value="P:regulation of heart rate by cardiac conduction"/>
    <property type="evidence" value="ECO:0000315"/>
    <property type="project" value="BHF-UCL"/>
</dbReference>
<dbReference type="GO" id="GO:0042391">
    <property type="term" value="P:regulation of membrane potential"/>
    <property type="evidence" value="ECO:0000314"/>
    <property type="project" value="BHF-UCL"/>
</dbReference>
<dbReference type="GO" id="GO:1901379">
    <property type="term" value="P:regulation of potassium ion transmembrane transport"/>
    <property type="evidence" value="ECO:0000314"/>
    <property type="project" value="BHF-UCL"/>
</dbReference>
<dbReference type="GO" id="GO:0043266">
    <property type="term" value="P:regulation of potassium ion transport"/>
    <property type="evidence" value="ECO:0000314"/>
    <property type="project" value="UniProtKB"/>
</dbReference>
<dbReference type="GO" id="GO:0060307">
    <property type="term" value="P:regulation of ventricular cardiac muscle cell membrane repolarization"/>
    <property type="evidence" value="ECO:0000315"/>
    <property type="project" value="BHF-UCL"/>
</dbReference>
<dbReference type="GO" id="GO:0033363">
    <property type="term" value="P:secretory granule organization"/>
    <property type="evidence" value="ECO:0007669"/>
    <property type="project" value="Ensembl"/>
</dbReference>
<dbReference type="GO" id="GO:0007605">
    <property type="term" value="P:sensory perception of sound"/>
    <property type="evidence" value="ECO:0000304"/>
    <property type="project" value="ProtInc"/>
</dbReference>
<dbReference type="GO" id="GO:0086005">
    <property type="term" value="P:ventricular cardiac muscle cell action potential"/>
    <property type="evidence" value="ECO:0000315"/>
    <property type="project" value="BHF-UCL"/>
</dbReference>
<dbReference type="GO" id="GO:0021750">
    <property type="term" value="P:vestibular nucleus development"/>
    <property type="evidence" value="ECO:0007669"/>
    <property type="project" value="Ensembl"/>
</dbReference>
<dbReference type="DisProt" id="DP00796"/>
<dbReference type="InterPro" id="IPR000369">
    <property type="entry name" value="K_chnl_KCNE"/>
</dbReference>
<dbReference type="InterPro" id="IPR005424">
    <property type="entry name" value="KCNE1"/>
</dbReference>
<dbReference type="PANTHER" id="PTHR15282:SF10">
    <property type="entry name" value="POTASSIUM VOLTAGE-GATED CHANNEL SUBFAMILY E MEMBER 1"/>
    <property type="match status" value="1"/>
</dbReference>
<dbReference type="PANTHER" id="PTHR15282">
    <property type="entry name" value="POTASSIUM VOLTAGE-GATED CHANNEL SUBFAMILY E MEMBER 1, 3"/>
    <property type="match status" value="1"/>
</dbReference>
<dbReference type="Pfam" id="PF02060">
    <property type="entry name" value="ISK_Channel"/>
    <property type="match status" value="1"/>
</dbReference>
<dbReference type="PRINTS" id="PR01604">
    <property type="entry name" value="KCNE1CHANNEL"/>
</dbReference>
<dbReference type="PRINTS" id="PR00168">
    <property type="entry name" value="KCNECHANNEL"/>
</dbReference>
<gene>
    <name evidence="29" type="primary">KCNE1</name>
</gene>
<feature type="chain" id="PRO_0000144278" description="Potassium voltage-gated channel subfamily E member 1">
    <location>
        <begin position="1"/>
        <end position="129"/>
    </location>
</feature>
<feature type="transmembrane region" description="Helical" evidence="3">
    <location>
        <begin position="44"/>
        <end position="66"/>
    </location>
</feature>
<feature type="topological domain" description="Cytoplasmic" evidence="3">
    <location>
        <begin position="67"/>
        <end position="129"/>
    </location>
</feature>
<feature type="region of interest" description="interaction with KCNQ1 C-terminus" evidence="17">
    <location>
        <begin position="109"/>
        <end position="129"/>
    </location>
</feature>
<feature type="site" description="Interacts with the scolopendra toxin SSD609" evidence="18">
    <location>
        <position position="19"/>
    </location>
</feature>
<feature type="modified residue" description="Phosphoserine; by PKC" evidence="1">
    <location>
        <position position="102"/>
    </location>
</feature>
<feature type="glycosylation site" description="N-linked (GlcNAc...) asparagine" evidence="15 16">
    <location>
        <position position="5"/>
    </location>
</feature>
<feature type="glycosylation site" description="O-linked (GalNAc...) threonine" evidence="15">
    <location>
        <position position="7"/>
    </location>
</feature>
<feature type="glycosylation site" description="N-linked (GlcNAc...) asparagine" evidence="16">
    <location>
        <position position="26"/>
    </location>
</feature>
<feature type="sequence variant" id="VAR_008897" description="In JLNS2; impairs glycosylation at N-5; dbSNP:rs28933384." evidence="16 24">
    <original>T</original>
    <variation>I</variation>
    <location>
        <position position="7"/>
    </location>
</feature>
<feature type="sequence variant" id="VAR_074908" description="In LQT5; uncertain significance; dbSNP:rs199473348." evidence="13">
    <original>A</original>
    <variation>V</variation>
    <location>
        <position position="8"/>
    </location>
</feature>
<feature type="sequence variant" id="VAR_074909" description="In LQT5; uncertain significance; dbSNP:rs144917638." evidence="13">
    <original>T</original>
    <variation>M</variation>
    <location>
        <position position="10"/>
    </location>
</feature>
<feature type="sequence variant" id="VAR_074910" description="In LQT5; uncertain significance; dbSNP:rs199473350." evidence="13">
    <original>S</original>
    <variation>L</variation>
    <location>
        <position position="28"/>
    </location>
</feature>
<feature type="sequence variant" id="VAR_009906" description="In LQT5; uncertain significance; dbSNP:rs17857111." evidence="5 9 13">
    <original>R</original>
    <variation>H</variation>
    <location>
        <position position="32"/>
    </location>
</feature>
<feature type="sequence variant" id="VAR_074911" description="In LQT5; uncertain significance; dbSNP:rs199473351." evidence="10">
    <original>R</original>
    <variation>H</variation>
    <location>
        <position position="36"/>
    </location>
</feature>
<feature type="sequence variant" id="VAR_001558" description="In dbSNP:rs1805127." evidence="9 11 19">
    <original>S</original>
    <variation>G</variation>
    <location>
        <position position="38"/>
    </location>
</feature>
<feature type="sequence variant" id="VAR_008898" description="In JLNS2; dbSNP:rs199473353." evidence="4">
    <original>V</original>
    <variation>F</variation>
    <location>
        <position position="47"/>
    </location>
</feature>
<feature type="sequence variant" id="VAR_008899" description="In JLNS2." evidence="4">
    <original>L</original>
    <variation>H</variation>
    <location>
        <position position="51"/>
    </location>
</feature>
<feature type="sequence variant" id="VAR_048024" description="In dbSNP:rs17173509.">
    <original>G</original>
    <variation>A</variation>
    <location>
        <position position="52"/>
    </location>
</feature>
<feature type="sequence variant" id="VAR_074912" description="In LQT5; uncertain significance; dbSNP:rs199473355." evidence="10">
    <original>F</original>
    <variation>S</variation>
    <location>
        <position position="53"/>
    </location>
</feature>
<feature type="sequence variant" id="VAR_074913" description="In LQT5; uncertain significance; dbSNP:rs199473644." evidence="13">
    <original>G</original>
    <variation>S</variation>
    <location>
        <position position="55"/>
    </location>
</feature>
<feature type="sequence variant" id="VAR_001559" description="In JLNS2; dbSNP:rs281865421." evidence="23">
    <original>TL</original>
    <variation>PP</variation>
    <location>
        <begin position="58"/>
        <end position="59"/>
    </location>
</feature>
<feature type="sequence variant" id="VAR_074914" description="In LQT5; uncertain significance; dbSNP:rs147187721." evidence="13">
    <original>T</original>
    <variation>P</variation>
    <location>
        <position position="58"/>
    </location>
</feature>
<feature type="sequence variant" id="VAR_074915" description="In LQT5; uncertain significance; dbSNP:rs141813529." evidence="13">
    <original>L</original>
    <variation>P</variation>
    <location>
        <position position="59"/>
    </location>
</feature>
<feature type="sequence variant" id="VAR_074916" description="In LQT5; uncertain significance; dbSNP:rs199473645." evidence="13">
    <original>R</original>
    <variation>C</variation>
    <location>
        <position position="67"/>
    </location>
</feature>
<feature type="sequence variant" id="VAR_074917" description="In LQT5; uncertain significance; dbSNP:rs79654911." evidence="13">
    <original>R</original>
    <variation>H</variation>
    <location>
        <position position="67"/>
    </location>
</feature>
<feature type="sequence variant" id="VAR_074918" description="In LQT5; uncertain significance; dbSNP:rs199473646." evidence="13">
    <original>K</original>
    <variation>M</variation>
    <location>
        <position position="70"/>
    </location>
</feature>
<feature type="sequence variant" id="VAR_008900" description="In LQT5; dbSNP:rs74315446." evidence="25">
    <original>S</original>
    <variation>L</variation>
    <location>
        <position position="74"/>
    </location>
</feature>
<feature type="sequence variant" id="VAR_008901" description="In LQT5 and JLNS2; suppresses KCNQ1 currents markedly; dbSNP:rs74315445." evidence="4 13 24 25 26">
    <original>D</original>
    <variation>N</variation>
    <location>
        <position position="76"/>
    </location>
</feature>
<feature type="sequence variant" id="VAR_074919" description="In LQT5; uncertain significance; dbSNP:rs199473360." evidence="13">
    <original>E</original>
    <variation>K</variation>
    <location>
        <position position="83"/>
    </location>
</feature>
<feature type="sequence variant" id="VAR_008902" description="Predisposes to acquired LQT5 susceptibility; shows a significant difference in current density and midpoint potential compared to the wild-type channel; dbSNP:rs1805128." evidence="8 11 20">
    <original>D</original>
    <variation>N</variation>
    <location>
        <position position="85"/>
    </location>
</feature>
<feature type="sequence variant" id="VAR_008903" description="In LQT5; dbSNP:rs199473361." evidence="4">
    <original>W</original>
    <variation>R</variation>
    <location>
        <position position="87"/>
    </location>
</feature>
<feature type="sequence variant" id="VAR_009907" description="In LQT5; dbSNP:rs199473362." evidence="5">
    <original>R</original>
    <variation>W</variation>
    <location>
        <position position="98"/>
    </location>
</feature>
<feature type="sequence variant" id="VAR_012802" description="In LQT5; uncertain significance; no effect on KCNQ1 C-terminus interaction; increases cAMP-mediated up-regulation of the I(KS) current; no effect on phosphorylation at S27; dbSNP:rs77442996." evidence="6 17">
    <original>V</original>
    <variation>I</variation>
    <location>
        <position position="109"/>
    </location>
</feature>
<feature type="sequence variant" id="VAR_074920" description="In LQT5; uncertain significance; dbSNP:rs142511345." evidence="13">
    <original>T</original>
    <variation>M</variation>
    <location>
        <position position="125"/>
    </location>
</feature>
<feature type="sequence variant" id="VAR_009908" description="In LQT5; moderately reduces I(KS) current density; no change of the voltage dependence of channel activation; markedly reduces interaction with KCNQ1 C-terminus; no effect on plasma membrane localization; loss of cAMP-mediated up-regulation of the I(KS) current; no effect on interaction with AKAP9; impairs phosphorylation at S-27 during cAMP-dependent stimulation; dbSNP:rs199473647." evidence="5 17">
    <original>P</original>
    <variation>T</variation>
    <location>
        <position position="127"/>
    </location>
</feature>
<feature type="mutagenesis site" description="No measurable effect on assembly with KCNQ1 or cell surface expression of the KCNE1/KCNQ1 channel complex, and loss of glycosylation at N-5; when associated with T-28." evidence="15">
    <original>N</original>
    <variation>Q</variation>
    <location>
        <position position="5"/>
    </location>
</feature>
<feature type="mutagenesis site" description="No measurable effect on assembly with KCNQ1 or cell surface expression of the KCNE1/KCNQ1 channel complex. Loss of glycosylation at T-7." evidence="15">
    <original>T</original>
    <variation>F</variation>
    <location>
        <position position="6"/>
    </location>
</feature>
<feature type="mutagenesis site" description="50% reduction of cell surface expression of the KCNE1/KCNQ1 channel complex, and loss of glycosylation at N-5 and T-7; when associated with T-28." evidence="15">
    <original>T</original>
    <variation>A</variation>
    <location>
        <position position="7"/>
    </location>
</feature>
<feature type="mutagenesis site" description="No change in inhibition of the complex KCNQ1-KCNE1 by the scolopendra toxin SSD609." evidence="18">
    <original>K</original>
    <variation>D</variation>
    <location>
        <position position="15"/>
    </location>
</feature>
<feature type="mutagenesis site" description="Loss inhibition of the complex KCNQ1-KCNE1 by the scolopendra toxin SSD609." evidence="18">
    <original>E</original>
    <variation>K</variation>
    <location>
        <position position="19"/>
    </location>
</feature>
<feature type="mutagenesis site" description="No measurable effect on assembly with KCNQ1 or cell surface expression of the KCNE1/KCNQ1 channel complex, and loss of glycosylation at N-5; when associated with Q-5. 50% reduction of cell surface expression of the KCNE1/KCNQ1 channel complex, and loss of glycosylation at N-5 and T-7; when associated with A-7." evidence="15">
    <original>S</original>
    <variation>T</variation>
    <location>
        <position position="28"/>
    </location>
</feature>
<feature type="mutagenesis site" description="Increase in inhibition of the complex KCNQ1-KCNE1 by the scolopendra toxin SSD609." evidence="18">
    <original>R</original>
    <variation>D</variation>
    <location>
        <position position="32"/>
    </location>
</feature>
<feature type="mutagenesis site" description="Lowers current 2-fold and leads to faster deactivation of KCNQ1/KCNE1 channel." evidence="7">
    <original>K</original>
    <variation>H</variation>
    <location>
        <position position="69"/>
    </location>
</feature>
<feature type="mutagenesis site" description="Totally suppressed interaction with KCNQ1 C-terminus." evidence="17">
    <location>
        <begin position="109"/>
        <end position="129"/>
    </location>
</feature>
<feature type="helix" evidence="30">
    <location>
        <begin position="4"/>
        <end position="9"/>
    </location>
</feature>
<feature type="helix" evidence="30">
    <location>
        <begin position="13"/>
        <end position="22"/>
    </location>
</feature>
<feature type="helix" evidence="30">
    <location>
        <begin position="30"/>
        <end position="32"/>
    </location>
</feature>
<feature type="helix" evidence="30">
    <location>
        <begin position="46"/>
        <end position="71"/>
    </location>
</feature>
<feature type="turn" evidence="30">
    <location>
        <begin position="77"/>
        <end position="81"/>
    </location>
</feature>
<feature type="turn" evidence="30">
    <location>
        <begin position="84"/>
        <end position="86"/>
    </location>
</feature>
<feature type="helix" evidence="30">
    <location>
        <begin position="92"/>
        <end position="105"/>
    </location>
</feature>
<feature type="strand" evidence="30">
    <location>
        <begin position="114"/>
        <end position="116"/>
    </location>
</feature>